<proteinExistence type="inferred from homology"/>
<reference key="1">
    <citation type="journal article" date="2009" name="BMC Genomics">
        <title>Genome evolution driven by host adaptations results in a more virulent and antimicrobial-resistant Streptococcus pneumoniae serotype 14.</title>
        <authorList>
            <person name="Ding F."/>
            <person name="Tang P."/>
            <person name="Hsu M.-H."/>
            <person name="Cui P."/>
            <person name="Hu S."/>
            <person name="Yu J."/>
            <person name="Chiu C.-H."/>
        </authorList>
    </citation>
    <scope>NUCLEOTIDE SEQUENCE [LARGE SCALE GENOMIC DNA]</scope>
    <source>
        <strain>CGSP14</strain>
    </source>
</reference>
<accession>B2IMZ8</accession>
<feature type="chain" id="PRO_1000095413" description="Arginine--tRNA ligase">
    <location>
        <begin position="1"/>
        <end position="563"/>
    </location>
</feature>
<feature type="short sequence motif" description="'HIGH' region">
    <location>
        <begin position="121"/>
        <end position="131"/>
    </location>
</feature>
<sequence>MNTKELIASELSSIIDSLDQEAILKLLETPKNSEMGDIAFPAFSLAKVERKAPQMIAAELAEKMNSQAFEKVVATGPYVNFFLDKSAISAQVLQAVTTEKEHYADQNIGKQENVVIDMSSPNIAKPFSIGHLRSTVIGDSLSHIFQKIGYQTVKVNHLGDWGKQFGMLIVAYKKWGDEEAVKAHPIDELLKLYVRINAEAENDPSLDEEAREWFRKLENGDEEALALWQWFRDESLVEFNRLYNELKVEFDSYNGEAFYNDKMDAVVDILSEKGLLLESEGAQVVNLEKYGIEHPALIKKSDGATLYITRDLAAALYRKNEYQFAKSIYVVGQEQSAHFKQLKAVLQEMGYDWSDDITHVPFGLVTKEGKKLSTRKGNVILLEPTIAEAVSRAKVQIEAKNPELENKDQVAHAVGVGAIKFYDLKTDRTNGYDFDLEAMVSFEGETGPYVQYAYARIQSILRKADFKPETSGNYSLNDTESWEIIKLIQDFPRIINRAADNFEPSIIAKFAISLAQSFNKYYAHTRILDESPERDSRLALSYATAVVLKEALRLLGVEAPEKM</sequence>
<dbReference type="EC" id="6.1.1.19" evidence="1"/>
<dbReference type="EMBL" id="CP001033">
    <property type="protein sequence ID" value="ACB91297.1"/>
    <property type="molecule type" value="Genomic_DNA"/>
</dbReference>
<dbReference type="RefSeq" id="WP_001092736.1">
    <property type="nucleotide sequence ID" value="NC_010582.1"/>
</dbReference>
<dbReference type="SMR" id="B2IMZ8"/>
<dbReference type="KEGG" id="spw:SPCG_2045"/>
<dbReference type="HOGENOM" id="CLU_006406_6_1_9"/>
<dbReference type="GO" id="GO:0005737">
    <property type="term" value="C:cytoplasm"/>
    <property type="evidence" value="ECO:0007669"/>
    <property type="project" value="UniProtKB-SubCell"/>
</dbReference>
<dbReference type="GO" id="GO:0004814">
    <property type="term" value="F:arginine-tRNA ligase activity"/>
    <property type="evidence" value="ECO:0007669"/>
    <property type="project" value="UniProtKB-UniRule"/>
</dbReference>
<dbReference type="GO" id="GO:0005524">
    <property type="term" value="F:ATP binding"/>
    <property type="evidence" value="ECO:0007669"/>
    <property type="project" value="UniProtKB-UniRule"/>
</dbReference>
<dbReference type="GO" id="GO:0006420">
    <property type="term" value="P:arginyl-tRNA aminoacylation"/>
    <property type="evidence" value="ECO:0007669"/>
    <property type="project" value="UniProtKB-UniRule"/>
</dbReference>
<dbReference type="CDD" id="cd07956">
    <property type="entry name" value="Anticodon_Ia_Arg"/>
    <property type="match status" value="1"/>
</dbReference>
<dbReference type="CDD" id="cd00671">
    <property type="entry name" value="ArgRS_core"/>
    <property type="match status" value="1"/>
</dbReference>
<dbReference type="FunFam" id="1.10.730.10:FF:000034">
    <property type="entry name" value="Arginine--tRNA ligase"/>
    <property type="match status" value="1"/>
</dbReference>
<dbReference type="FunFam" id="3.30.1360.70:FF:000005">
    <property type="entry name" value="Arginine--tRNA ligase"/>
    <property type="match status" value="1"/>
</dbReference>
<dbReference type="FunFam" id="3.40.50.620:FF:000116">
    <property type="entry name" value="Arginine--tRNA ligase"/>
    <property type="match status" value="1"/>
</dbReference>
<dbReference type="Gene3D" id="3.30.1360.70">
    <property type="entry name" value="Arginyl tRNA synthetase N-terminal domain"/>
    <property type="match status" value="1"/>
</dbReference>
<dbReference type="Gene3D" id="3.40.50.620">
    <property type="entry name" value="HUPs"/>
    <property type="match status" value="1"/>
</dbReference>
<dbReference type="Gene3D" id="1.10.730.10">
    <property type="entry name" value="Isoleucyl-tRNA Synthetase, Domain 1"/>
    <property type="match status" value="1"/>
</dbReference>
<dbReference type="HAMAP" id="MF_00123">
    <property type="entry name" value="Arg_tRNA_synth"/>
    <property type="match status" value="1"/>
</dbReference>
<dbReference type="InterPro" id="IPR001278">
    <property type="entry name" value="Arg-tRNA-ligase"/>
</dbReference>
<dbReference type="InterPro" id="IPR005148">
    <property type="entry name" value="Arg-tRNA-synth_N"/>
</dbReference>
<dbReference type="InterPro" id="IPR036695">
    <property type="entry name" value="Arg-tRNA-synth_N_sf"/>
</dbReference>
<dbReference type="InterPro" id="IPR035684">
    <property type="entry name" value="ArgRS_core"/>
</dbReference>
<dbReference type="InterPro" id="IPR008909">
    <property type="entry name" value="DALR_anticod-bd"/>
</dbReference>
<dbReference type="InterPro" id="IPR014729">
    <property type="entry name" value="Rossmann-like_a/b/a_fold"/>
</dbReference>
<dbReference type="InterPro" id="IPR009080">
    <property type="entry name" value="tRNAsynth_Ia_anticodon-bd"/>
</dbReference>
<dbReference type="NCBIfam" id="TIGR00456">
    <property type="entry name" value="argS"/>
    <property type="match status" value="1"/>
</dbReference>
<dbReference type="PANTHER" id="PTHR11956:SF5">
    <property type="entry name" value="ARGININE--TRNA LIGASE, CYTOPLASMIC"/>
    <property type="match status" value="1"/>
</dbReference>
<dbReference type="PANTHER" id="PTHR11956">
    <property type="entry name" value="ARGINYL-TRNA SYNTHETASE"/>
    <property type="match status" value="1"/>
</dbReference>
<dbReference type="Pfam" id="PF03485">
    <property type="entry name" value="Arg_tRNA_synt_N"/>
    <property type="match status" value="1"/>
</dbReference>
<dbReference type="Pfam" id="PF05746">
    <property type="entry name" value="DALR_1"/>
    <property type="match status" value="1"/>
</dbReference>
<dbReference type="Pfam" id="PF00750">
    <property type="entry name" value="tRNA-synt_1d"/>
    <property type="match status" value="1"/>
</dbReference>
<dbReference type="PRINTS" id="PR01038">
    <property type="entry name" value="TRNASYNTHARG"/>
</dbReference>
<dbReference type="SMART" id="SM01016">
    <property type="entry name" value="Arg_tRNA_synt_N"/>
    <property type="match status" value="1"/>
</dbReference>
<dbReference type="SMART" id="SM00836">
    <property type="entry name" value="DALR_1"/>
    <property type="match status" value="1"/>
</dbReference>
<dbReference type="SUPFAM" id="SSF47323">
    <property type="entry name" value="Anticodon-binding domain of a subclass of class I aminoacyl-tRNA synthetases"/>
    <property type="match status" value="1"/>
</dbReference>
<dbReference type="SUPFAM" id="SSF55190">
    <property type="entry name" value="Arginyl-tRNA synthetase (ArgRS), N-terminal 'additional' domain"/>
    <property type="match status" value="1"/>
</dbReference>
<dbReference type="SUPFAM" id="SSF52374">
    <property type="entry name" value="Nucleotidylyl transferase"/>
    <property type="match status" value="1"/>
</dbReference>
<protein>
    <recommendedName>
        <fullName evidence="1">Arginine--tRNA ligase</fullName>
        <ecNumber evidence="1">6.1.1.19</ecNumber>
    </recommendedName>
    <alternativeName>
        <fullName evidence="1">Arginyl-tRNA synthetase</fullName>
        <shortName evidence="1">ArgRS</shortName>
    </alternativeName>
</protein>
<gene>
    <name evidence="1" type="primary">argS</name>
    <name type="ordered locus">SPCG_2045</name>
</gene>
<organism>
    <name type="scientific">Streptococcus pneumoniae (strain CGSP14)</name>
    <dbReference type="NCBI Taxonomy" id="516950"/>
    <lineage>
        <taxon>Bacteria</taxon>
        <taxon>Bacillati</taxon>
        <taxon>Bacillota</taxon>
        <taxon>Bacilli</taxon>
        <taxon>Lactobacillales</taxon>
        <taxon>Streptococcaceae</taxon>
        <taxon>Streptococcus</taxon>
    </lineage>
</organism>
<comment type="catalytic activity">
    <reaction evidence="1">
        <text>tRNA(Arg) + L-arginine + ATP = L-arginyl-tRNA(Arg) + AMP + diphosphate</text>
        <dbReference type="Rhea" id="RHEA:20301"/>
        <dbReference type="Rhea" id="RHEA-COMP:9658"/>
        <dbReference type="Rhea" id="RHEA-COMP:9673"/>
        <dbReference type="ChEBI" id="CHEBI:30616"/>
        <dbReference type="ChEBI" id="CHEBI:32682"/>
        <dbReference type="ChEBI" id="CHEBI:33019"/>
        <dbReference type="ChEBI" id="CHEBI:78442"/>
        <dbReference type="ChEBI" id="CHEBI:78513"/>
        <dbReference type="ChEBI" id="CHEBI:456215"/>
        <dbReference type="EC" id="6.1.1.19"/>
    </reaction>
</comment>
<comment type="subunit">
    <text evidence="1">Monomer.</text>
</comment>
<comment type="subcellular location">
    <subcellularLocation>
        <location evidence="1">Cytoplasm</location>
    </subcellularLocation>
</comment>
<comment type="similarity">
    <text evidence="1">Belongs to the class-I aminoacyl-tRNA synthetase family.</text>
</comment>
<evidence type="ECO:0000255" key="1">
    <source>
        <dbReference type="HAMAP-Rule" id="MF_00123"/>
    </source>
</evidence>
<keyword id="KW-0030">Aminoacyl-tRNA synthetase</keyword>
<keyword id="KW-0067">ATP-binding</keyword>
<keyword id="KW-0963">Cytoplasm</keyword>
<keyword id="KW-0436">Ligase</keyword>
<keyword id="KW-0547">Nucleotide-binding</keyword>
<keyword id="KW-0648">Protein biosynthesis</keyword>
<name>SYR_STRPS</name>